<proteinExistence type="inferred from homology"/>
<dbReference type="EC" id="3.1.3.11" evidence="1"/>
<dbReference type="EMBL" id="CP000284">
    <property type="protein sequence ID" value="ABE48856.1"/>
    <property type="molecule type" value="Genomic_DNA"/>
</dbReference>
<dbReference type="RefSeq" id="WP_011478953.1">
    <property type="nucleotide sequence ID" value="NC_007947.1"/>
</dbReference>
<dbReference type="SMR" id="Q1H3T1"/>
<dbReference type="STRING" id="265072.Mfla_0586"/>
<dbReference type="KEGG" id="mfa:Mfla_0586"/>
<dbReference type="eggNOG" id="COG0158">
    <property type="taxonomic scope" value="Bacteria"/>
</dbReference>
<dbReference type="HOGENOM" id="CLU_039977_0_0_4"/>
<dbReference type="OrthoDB" id="9806756at2"/>
<dbReference type="UniPathway" id="UPA00138"/>
<dbReference type="Proteomes" id="UP000002440">
    <property type="component" value="Chromosome"/>
</dbReference>
<dbReference type="GO" id="GO:0005829">
    <property type="term" value="C:cytosol"/>
    <property type="evidence" value="ECO:0007669"/>
    <property type="project" value="TreeGrafter"/>
</dbReference>
<dbReference type="GO" id="GO:0042132">
    <property type="term" value="F:fructose 1,6-bisphosphate 1-phosphatase activity"/>
    <property type="evidence" value="ECO:0007669"/>
    <property type="project" value="UniProtKB-UniRule"/>
</dbReference>
<dbReference type="GO" id="GO:0000287">
    <property type="term" value="F:magnesium ion binding"/>
    <property type="evidence" value="ECO:0007669"/>
    <property type="project" value="UniProtKB-UniRule"/>
</dbReference>
<dbReference type="GO" id="GO:0030388">
    <property type="term" value="P:fructose 1,6-bisphosphate metabolic process"/>
    <property type="evidence" value="ECO:0007669"/>
    <property type="project" value="TreeGrafter"/>
</dbReference>
<dbReference type="GO" id="GO:0006002">
    <property type="term" value="P:fructose 6-phosphate metabolic process"/>
    <property type="evidence" value="ECO:0007669"/>
    <property type="project" value="TreeGrafter"/>
</dbReference>
<dbReference type="GO" id="GO:0006000">
    <property type="term" value="P:fructose metabolic process"/>
    <property type="evidence" value="ECO:0007669"/>
    <property type="project" value="TreeGrafter"/>
</dbReference>
<dbReference type="GO" id="GO:0006094">
    <property type="term" value="P:gluconeogenesis"/>
    <property type="evidence" value="ECO:0007669"/>
    <property type="project" value="UniProtKB-UniRule"/>
</dbReference>
<dbReference type="GO" id="GO:0005986">
    <property type="term" value="P:sucrose biosynthetic process"/>
    <property type="evidence" value="ECO:0007669"/>
    <property type="project" value="TreeGrafter"/>
</dbReference>
<dbReference type="CDD" id="cd00354">
    <property type="entry name" value="FBPase"/>
    <property type="match status" value="1"/>
</dbReference>
<dbReference type="FunFam" id="3.40.190.80:FF:000011">
    <property type="entry name" value="Fructose-1,6-bisphosphatase class 1"/>
    <property type="match status" value="1"/>
</dbReference>
<dbReference type="Gene3D" id="3.40.190.80">
    <property type="match status" value="1"/>
</dbReference>
<dbReference type="Gene3D" id="3.30.540.10">
    <property type="entry name" value="Fructose-1,6-Bisphosphatase, subunit A, domain 1"/>
    <property type="match status" value="1"/>
</dbReference>
<dbReference type="HAMAP" id="MF_01855">
    <property type="entry name" value="FBPase_class1"/>
    <property type="match status" value="1"/>
</dbReference>
<dbReference type="InterPro" id="IPR044015">
    <property type="entry name" value="FBPase_C_dom"/>
</dbReference>
<dbReference type="InterPro" id="IPR000146">
    <property type="entry name" value="FBPase_class-1"/>
</dbReference>
<dbReference type="InterPro" id="IPR033391">
    <property type="entry name" value="FBPase_N"/>
</dbReference>
<dbReference type="InterPro" id="IPR028343">
    <property type="entry name" value="FBPtase"/>
</dbReference>
<dbReference type="InterPro" id="IPR020548">
    <property type="entry name" value="Fructose_bisphosphatase_AS"/>
</dbReference>
<dbReference type="NCBIfam" id="NF006779">
    <property type="entry name" value="PRK09293.1-3"/>
    <property type="match status" value="1"/>
</dbReference>
<dbReference type="NCBIfam" id="NF006780">
    <property type="entry name" value="PRK09293.1-4"/>
    <property type="match status" value="1"/>
</dbReference>
<dbReference type="PANTHER" id="PTHR11556">
    <property type="entry name" value="FRUCTOSE-1,6-BISPHOSPHATASE-RELATED"/>
    <property type="match status" value="1"/>
</dbReference>
<dbReference type="PANTHER" id="PTHR11556:SF35">
    <property type="entry name" value="SEDOHEPTULOSE-1,7-BISPHOSPHATASE, CHLOROPLASTIC"/>
    <property type="match status" value="1"/>
</dbReference>
<dbReference type="Pfam" id="PF00316">
    <property type="entry name" value="FBPase"/>
    <property type="match status" value="1"/>
</dbReference>
<dbReference type="Pfam" id="PF18913">
    <property type="entry name" value="FBPase_C"/>
    <property type="match status" value="1"/>
</dbReference>
<dbReference type="PIRSF" id="PIRSF500210">
    <property type="entry name" value="FBPtase"/>
    <property type="match status" value="1"/>
</dbReference>
<dbReference type="PIRSF" id="PIRSF000904">
    <property type="entry name" value="FBPtase_SBPase"/>
    <property type="match status" value="1"/>
</dbReference>
<dbReference type="PRINTS" id="PR00115">
    <property type="entry name" value="F16BPHPHTASE"/>
</dbReference>
<dbReference type="SUPFAM" id="SSF56655">
    <property type="entry name" value="Carbohydrate phosphatase"/>
    <property type="match status" value="1"/>
</dbReference>
<dbReference type="PROSITE" id="PS00124">
    <property type="entry name" value="FBPASE"/>
    <property type="match status" value="1"/>
</dbReference>
<gene>
    <name evidence="1" type="primary">fbp</name>
    <name type="ordered locus">Mfla_0586</name>
</gene>
<organism>
    <name type="scientific">Methylobacillus flagellatus (strain ATCC 51484 / DSM 6875 / VKM B-1610 / KT)</name>
    <dbReference type="NCBI Taxonomy" id="265072"/>
    <lineage>
        <taxon>Bacteria</taxon>
        <taxon>Pseudomonadati</taxon>
        <taxon>Pseudomonadota</taxon>
        <taxon>Betaproteobacteria</taxon>
        <taxon>Nitrosomonadales</taxon>
        <taxon>Methylophilaceae</taxon>
        <taxon>Methylobacillus</taxon>
    </lineage>
</organism>
<name>F16PA_METFK</name>
<sequence length="331" mass="35936">MLKLSEFLVQQERQHAVADNVLTLIQDIAATCQAVAREIRYGALRGNMGSAGRENVQGEEQKALDVISNDIFTAMASKQPHVAAVASEEMAQAQVFAGKQGKYLLVFDPLDGSSNVNLNLSVGSIFSILPAPEGSVDEASFLQAGSRQLAAGYALYGTSTMLVLTMGHGVHGFTLDPDQGEFYLTHPGLTIAASTEEFAINMSNQRFWQPPVQRYIAECIAGSSGPRGKDFNMRWVATMVAEVHRLLVRGGVFLYPLDSRAVGRGGRLRLLYEANPMSLLVEQAGGLATTGHRRILDVEPAGLHQRVAVMMGAREEVERLQDYHSFTDPTA</sequence>
<comment type="catalytic activity">
    <reaction evidence="1">
        <text>beta-D-fructose 1,6-bisphosphate + H2O = beta-D-fructose 6-phosphate + phosphate</text>
        <dbReference type="Rhea" id="RHEA:11064"/>
        <dbReference type="ChEBI" id="CHEBI:15377"/>
        <dbReference type="ChEBI" id="CHEBI:32966"/>
        <dbReference type="ChEBI" id="CHEBI:43474"/>
        <dbReference type="ChEBI" id="CHEBI:57634"/>
        <dbReference type="EC" id="3.1.3.11"/>
    </reaction>
</comment>
<comment type="cofactor">
    <cofactor evidence="1">
        <name>Mg(2+)</name>
        <dbReference type="ChEBI" id="CHEBI:18420"/>
    </cofactor>
    <text evidence="1">Binds 2 magnesium ions per subunit.</text>
</comment>
<comment type="pathway">
    <text evidence="1">Carbohydrate biosynthesis; gluconeogenesis.</text>
</comment>
<comment type="subunit">
    <text evidence="1">Homotetramer.</text>
</comment>
<comment type="subcellular location">
    <subcellularLocation>
        <location evidence="1">Cytoplasm</location>
    </subcellularLocation>
</comment>
<comment type="similarity">
    <text evidence="1">Belongs to the FBPase class 1 family.</text>
</comment>
<feature type="chain" id="PRO_0000364599" description="Fructose-1,6-bisphosphatase class 1">
    <location>
        <begin position="1"/>
        <end position="331"/>
    </location>
</feature>
<feature type="binding site" evidence="1">
    <location>
        <position position="88"/>
    </location>
    <ligand>
        <name>Mg(2+)</name>
        <dbReference type="ChEBI" id="CHEBI:18420"/>
        <label>1</label>
    </ligand>
</feature>
<feature type="binding site" evidence="1">
    <location>
        <position position="108"/>
    </location>
    <ligand>
        <name>Mg(2+)</name>
        <dbReference type="ChEBI" id="CHEBI:18420"/>
        <label>1</label>
    </ligand>
</feature>
<feature type="binding site" evidence="1">
    <location>
        <position position="108"/>
    </location>
    <ligand>
        <name>Mg(2+)</name>
        <dbReference type="ChEBI" id="CHEBI:18420"/>
        <label>2</label>
    </ligand>
</feature>
<feature type="binding site" evidence="1">
    <location>
        <position position="110"/>
    </location>
    <ligand>
        <name>Mg(2+)</name>
        <dbReference type="ChEBI" id="CHEBI:18420"/>
        <label>1</label>
    </ligand>
</feature>
<feature type="binding site" evidence="1">
    <location>
        <begin position="111"/>
        <end position="114"/>
    </location>
    <ligand>
        <name>substrate</name>
    </ligand>
</feature>
<feature type="binding site" evidence="1">
    <location>
        <position position="111"/>
    </location>
    <ligand>
        <name>Mg(2+)</name>
        <dbReference type="ChEBI" id="CHEBI:18420"/>
        <label>2</label>
    </ligand>
</feature>
<feature type="binding site" evidence="1">
    <location>
        <position position="201"/>
    </location>
    <ligand>
        <name>substrate</name>
    </ligand>
</feature>
<feature type="binding site" evidence="1">
    <location>
        <position position="273"/>
    </location>
    <ligand>
        <name>Mg(2+)</name>
        <dbReference type="ChEBI" id="CHEBI:18420"/>
        <label>2</label>
    </ligand>
</feature>
<reference key="1">
    <citation type="submission" date="2006-03" db="EMBL/GenBank/DDBJ databases">
        <title>Complete sequence of Methylobacillus flagellatus KT.</title>
        <authorList>
            <consortium name="US DOE Joint Genome Institute"/>
            <person name="Copeland A."/>
            <person name="Lucas S."/>
            <person name="Lapidus A."/>
            <person name="Barry K."/>
            <person name="Detter J.C."/>
            <person name="Glavina del Rio T."/>
            <person name="Hammon N."/>
            <person name="Israni S."/>
            <person name="Dalin E."/>
            <person name="Tice H."/>
            <person name="Pitluck S."/>
            <person name="Brettin T."/>
            <person name="Bruce D."/>
            <person name="Han C."/>
            <person name="Tapia R."/>
            <person name="Saunders E."/>
            <person name="Gilna P."/>
            <person name="Schmutz J."/>
            <person name="Larimer F."/>
            <person name="Land M."/>
            <person name="Kyrpides N."/>
            <person name="Anderson I."/>
            <person name="Richardson P."/>
        </authorList>
    </citation>
    <scope>NUCLEOTIDE SEQUENCE [LARGE SCALE GENOMIC DNA]</scope>
    <source>
        <strain>ATCC 51484 / DSM 6875 / VKM B-1610 / KT</strain>
    </source>
</reference>
<accession>Q1H3T1</accession>
<evidence type="ECO:0000255" key="1">
    <source>
        <dbReference type="HAMAP-Rule" id="MF_01855"/>
    </source>
</evidence>
<protein>
    <recommendedName>
        <fullName evidence="1">Fructose-1,6-bisphosphatase class 1</fullName>
        <shortName evidence="1">FBPase class 1</shortName>
        <ecNumber evidence="1">3.1.3.11</ecNumber>
    </recommendedName>
    <alternativeName>
        <fullName evidence="1">D-fructose-1,6-bisphosphate 1-phosphohydrolase class 1</fullName>
    </alternativeName>
</protein>
<keyword id="KW-0119">Carbohydrate metabolism</keyword>
<keyword id="KW-0963">Cytoplasm</keyword>
<keyword id="KW-0378">Hydrolase</keyword>
<keyword id="KW-0460">Magnesium</keyword>
<keyword id="KW-0479">Metal-binding</keyword>
<keyword id="KW-1185">Reference proteome</keyword>